<evidence type="ECO:0000255" key="1">
    <source>
        <dbReference type="HAMAP-Rule" id="MF_02001"/>
    </source>
</evidence>
<evidence type="ECO:0000255" key="2">
    <source>
        <dbReference type="PROSITE-ProRule" id="PRU00285"/>
    </source>
</evidence>
<dbReference type="EMBL" id="CP000822">
    <property type="protein sequence ID" value="ABV11212.1"/>
    <property type="molecule type" value="Genomic_DNA"/>
</dbReference>
<dbReference type="RefSeq" id="WP_012000793.1">
    <property type="nucleotide sequence ID" value="NC_009792.1"/>
</dbReference>
<dbReference type="SMR" id="A8ACJ9"/>
<dbReference type="STRING" id="290338.CKO_00033"/>
<dbReference type="GeneID" id="45134341"/>
<dbReference type="KEGG" id="cko:CKO_00033"/>
<dbReference type="HOGENOM" id="CLU_046737_4_2_6"/>
<dbReference type="OrthoDB" id="6871152at2"/>
<dbReference type="Proteomes" id="UP000008148">
    <property type="component" value="Chromosome"/>
</dbReference>
<dbReference type="GO" id="GO:0005737">
    <property type="term" value="C:cytoplasm"/>
    <property type="evidence" value="ECO:0007669"/>
    <property type="project" value="UniProtKB-SubCell"/>
</dbReference>
<dbReference type="GO" id="GO:0050821">
    <property type="term" value="P:protein stabilization"/>
    <property type="evidence" value="ECO:0007669"/>
    <property type="project" value="UniProtKB-UniRule"/>
</dbReference>
<dbReference type="CDD" id="cd06470">
    <property type="entry name" value="ACD_IbpA-B_like"/>
    <property type="match status" value="1"/>
</dbReference>
<dbReference type="Gene3D" id="2.60.40.790">
    <property type="match status" value="1"/>
</dbReference>
<dbReference type="HAMAP" id="MF_02001">
    <property type="entry name" value="HSP20_IbpB"/>
    <property type="match status" value="1"/>
</dbReference>
<dbReference type="InterPro" id="IPR002068">
    <property type="entry name" value="A-crystallin/Hsp20_dom"/>
</dbReference>
<dbReference type="InterPro" id="IPR037913">
    <property type="entry name" value="ACD_IbpA/B"/>
</dbReference>
<dbReference type="InterPro" id="IPR008978">
    <property type="entry name" value="HSP20-like_chaperone"/>
</dbReference>
<dbReference type="InterPro" id="IPR022848">
    <property type="entry name" value="HSP20_IbpB"/>
</dbReference>
<dbReference type="NCBIfam" id="NF008618">
    <property type="entry name" value="PRK11597.1"/>
    <property type="match status" value="1"/>
</dbReference>
<dbReference type="PANTHER" id="PTHR47062">
    <property type="match status" value="1"/>
</dbReference>
<dbReference type="PANTHER" id="PTHR47062:SF2">
    <property type="entry name" value="SMALL HEAT SHOCK PROTEIN IBPB"/>
    <property type="match status" value="1"/>
</dbReference>
<dbReference type="Pfam" id="PF00011">
    <property type="entry name" value="HSP20"/>
    <property type="match status" value="1"/>
</dbReference>
<dbReference type="SUPFAM" id="SSF49764">
    <property type="entry name" value="HSP20-like chaperones"/>
    <property type="match status" value="1"/>
</dbReference>
<dbReference type="PROSITE" id="PS01031">
    <property type="entry name" value="SHSP"/>
    <property type="match status" value="1"/>
</dbReference>
<protein>
    <recommendedName>
        <fullName evidence="1">Small heat shock protein IbpB</fullName>
    </recommendedName>
    <alternativeName>
        <fullName evidence="1">16 kDa heat shock protein B</fullName>
    </alternativeName>
</protein>
<accession>A8ACJ9</accession>
<reference key="1">
    <citation type="submission" date="2007-08" db="EMBL/GenBank/DDBJ databases">
        <authorList>
            <consortium name="The Citrobacter koseri Genome Sequencing Project"/>
            <person name="McClelland M."/>
            <person name="Sanderson E.K."/>
            <person name="Porwollik S."/>
            <person name="Spieth J."/>
            <person name="Clifton W.S."/>
            <person name="Latreille P."/>
            <person name="Courtney L."/>
            <person name="Wang C."/>
            <person name="Pepin K."/>
            <person name="Bhonagiri V."/>
            <person name="Nash W."/>
            <person name="Johnson M."/>
            <person name="Thiruvilangam P."/>
            <person name="Wilson R."/>
        </authorList>
    </citation>
    <scope>NUCLEOTIDE SEQUENCE [LARGE SCALE GENOMIC DNA]</scope>
    <source>
        <strain>ATCC BAA-895 / CDC 4225-83 / SGSC4696</strain>
    </source>
</reference>
<keyword id="KW-0143">Chaperone</keyword>
<keyword id="KW-0963">Cytoplasm</keyword>
<keyword id="KW-1185">Reference proteome</keyword>
<keyword id="KW-0346">Stress response</keyword>
<proteinExistence type="inferred from homology"/>
<sequence>MRNYDLSPLLRQWIGFDKLANALQNTGESQSFPPYNIEKSDDNHYRITLALAGFRQEDLDIQLEGTRLTVKGTPAQPEKEIKWLHQGLVTQPFSLSFTLAENMEVSGATFTNGLLHIDLTRNEPETIAPQRIAISERPALNS</sequence>
<organism>
    <name type="scientific">Citrobacter koseri (strain ATCC BAA-895 / CDC 4225-83 / SGSC4696)</name>
    <dbReference type="NCBI Taxonomy" id="290338"/>
    <lineage>
        <taxon>Bacteria</taxon>
        <taxon>Pseudomonadati</taxon>
        <taxon>Pseudomonadota</taxon>
        <taxon>Gammaproteobacteria</taxon>
        <taxon>Enterobacterales</taxon>
        <taxon>Enterobacteriaceae</taxon>
        <taxon>Citrobacter</taxon>
    </lineage>
</organism>
<gene>
    <name evidence="1" type="primary">ibpB</name>
    <name type="ordered locus">CKO_00033</name>
</gene>
<feature type="chain" id="PRO_1000022030" description="Small heat shock protein IbpB">
    <location>
        <begin position="1"/>
        <end position="142"/>
    </location>
</feature>
<feature type="domain" description="sHSP" evidence="2">
    <location>
        <begin position="26"/>
        <end position="137"/>
    </location>
</feature>
<name>IBPB_CITK8</name>
<comment type="function">
    <text evidence="1">Associates with aggregated proteins, together with IbpA, to stabilize and protect them from irreversible denaturation and extensive proteolysis during heat shock and oxidative stress. Aggregated proteins bound to the IbpAB complex are more efficiently refolded and reactivated by the ATP-dependent chaperone systems ClpB and DnaK/DnaJ/GrpE. Its activity is ATP-independent.</text>
</comment>
<comment type="subunit">
    <text evidence="1">Homodimer. Forms homomultimers of about 100-150 subunits at optimal growth temperatures. Conformation changes to oligomers at high temperatures or high ionic concentrations. The decrease in size of the multimers is accompanied by an increase in chaperone activity.</text>
</comment>
<comment type="subcellular location">
    <subcellularLocation>
        <location evidence="1">Cytoplasm</location>
    </subcellularLocation>
</comment>
<comment type="domain">
    <text evidence="1">The N- and C-terminal flexible termini are involved in oligomerization and in the binding of non-native substrate proteins, and are essential for chaperone activity.</text>
</comment>
<comment type="similarity">
    <text evidence="1 2">Belongs to the small heat shock protein (HSP20) family.</text>
</comment>